<evidence type="ECO:0000250" key="1"/>
<evidence type="ECO:0000250" key="2">
    <source>
        <dbReference type="UniProtKB" id="P00157"/>
    </source>
</evidence>
<evidence type="ECO:0000255" key="3">
    <source>
        <dbReference type="PROSITE-ProRule" id="PRU00967"/>
    </source>
</evidence>
<evidence type="ECO:0000255" key="4">
    <source>
        <dbReference type="PROSITE-ProRule" id="PRU00968"/>
    </source>
</evidence>
<name>CYB_BALPH</name>
<comment type="function">
    <text evidence="2">Component of the ubiquinol-cytochrome c reductase complex (complex III or cytochrome b-c1 complex) that is part of the mitochondrial respiratory chain. The b-c1 complex mediates electron transfer from ubiquinol to cytochrome c. Contributes to the generation of a proton gradient across the mitochondrial membrane that is then used for ATP synthesis.</text>
</comment>
<comment type="cofactor">
    <cofactor evidence="2">
        <name>heme b</name>
        <dbReference type="ChEBI" id="CHEBI:60344"/>
    </cofactor>
    <text evidence="2">Binds 2 heme b groups non-covalently.</text>
</comment>
<comment type="subunit">
    <text evidence="2">The cytochrome bc1 complex contains 11 subunits: 3 respiratory subunits (MT-CYB, CYC1 and UQCRFS1), 2 core proteins (UQCRC1 and UQCRC2) and 6 low-molecular weight proteins (UQCRH/QCR6, UQCRB/QCR7, UQCRQ/QCR8, UQCR10/QCR9, UQCR11/QCR10 and a cleavage product of UQCRFS1). This cytochrome bc1 complex then forms a dimer.</text>
</comment>
<comment type="subcellular location">
    <subcellularLocation>
        <location evidence="2">Mitochondrion inner membrane</location>
        <topology evidence="2">Multi-pass membrane protein</topology>
    </subcellularLocation>
</comment>
<comment type="miscellaneous">
    <text evidence="1">Heme 1 (or BL or b562) is low-potential and absorbs at about 562 nm, and heme 2 (or BH or b566) is high-potential and absorbs at about 566 nm.</text>
</comment>
<comment type="similarity">
    <text evidence="3 4">Belongs to the cytochrome b family.</text>
</comment>
<comment type="caution">
    <text evidence="2">The full-length protein contains only eight transmembrane helices, not nine as predicted by bioinformatics tools.</text>
</comment>
<feature type="chain" id="PRO_0000060666" description="Cytochrome b">
    <location>
        <begin position="1"/>
        <end position="379"/>
    </location>
</feature>
<feature type="transmembrane region" description="Helical" evidence="2">
    <location>
        <begin position="33"/>
        <end position="53"/>
    </location>
</feature>
<feature type="transmembrane region" description="Helical" evidence="2">
    <location>
        <begin position="77"/>
        <end position="98"/>
    </location>
</feature>
<feature type="transmembrane region" description="Helical" evidence="2">
    <location>
        <begin position="113"/>
        <end position="133"/>
    </location>
</feature>
<feature type="transmembrane region" description="Helical" evidence="2">
    <location>
        <begin position="178"/>
        <end position="198"/>
    </location>
</feature>
<feature type="transmembrane region" description="Helical" evidence="2">
    <location>
        <begin position="226"/>
        <end position="246"/>
    </location>
</feature>
<feature type="transmembrane region" description="Helical" evidence="2">
    <location>
        <begin position="288"/>
        <end position="308"/>
    </location>
</feature>
<feature type="transmembrane region" description="Helical" evidence="2">
    <location>
        <begin position="320"/>
        <end position="340"/>
    </location>
</feature>
<feature type="transmembrane region" description="Helical" evidence="2">
    <location>
        <begin position="347"/>
        <end position="367"/>
    </location>
</feature>
<feature type="binding site" description="axial binding residue" evidence="2">
    <location>
        <position position="83"/>
    </location>
    <ligand>
        <name>heme b</name>
        <dbReference type="ChEBI" id="CHEBI:60344"/>
        <label>b562</label>
    </ligand>
    <ligandPart>
        <name>Fe</name>
        <dbReference type="ChEBI" id="CHEBI:18248"/>
    </ligandPart>
</feature>
<feature type="binding site" description="axial binding residue" evidence="2">
    <location>
        <position position="97"/>
    </location>
    <ligand>
        <name>heme b</name>
        <dbReference type="ChEBI" id="CHEBI:60344"/>
        <label>b566</label>
    </ligand>
    <ligandPart>
        <name>Fe</name>
        <dbReference type="ChEBI" id="CHEBI:18248"/>
    </ligandPart>
</feature>
<feature type="binding site" description="axial binding residue" evidence="2">
    <location>
        <position position="182"/>
    </location>
    <ligand>
        <name>heme b</name>
        <dbReference type="ChEBI" id="CHEBI:60344"/>
        <label>b562</label>
    </ligand>
    <ligandPart>
        <name>Fe</name>
        <dbReference type="ChEBI" id="CHEBI:18248"/>
    </ligandPart>
</feature>
<feature type="binding site" description="axial binding residue" evidence="2">
    <location>
        <position position="196"/>
    </location>
    <ligand>
        <name>heme b</name>
        <dbReference type="ChEBI" id="CHEBI:60344"/>
        <label>b566</label>
    </ligand>
    <ligandPart>
        <name>Fe</name>
        <dbReference type="ChEBI" id="CHEBI:18248"/>
    </ligandPart>
</feature>
<feature type="binding site" evidence="2">
    <location>
        <position position="201"/>
    </location>
    <ligand>
        <name>a ubiquinone</name>
        <dbReference type="ChEBI" id="CHEBI:16389"/>
    </ligand>
</feature>
<protein>
    <recommendedName>
        <fullName>Cytochrome b</fullName>
    </recommendedName>
    <alternativeName>
        <fullName>Complex III subunit 3</fullName>
    </alternativeName>
    <alternativeName>
        <fullName>Complex III subunit III</fullName>
    </alternativeName>
    <alternativeName>
        <fullName>Cytochrome b-c1 complex subunit 3</fullName>
    </alternativeName>
    <alternativeName>
        <fullName>Ubiquinol-cytochrome-c reductase complex cytochrome b subunit</fullName>
    </alternativeName>
</protein>
<keyword id="KW-0249">Electron transport</keyword>
<keyword id="KW-0349">Heme</keyword>
<keyword id="KW-0408">Iron</keyword>
<keyword id="KW-0472">Membrane</keyword>
<keyword id="KW-0479">Metal-binding</keyword>
<keyword id="KW-0496">Mitochondrion</keyword>
<keyword id="KW-0999">Mitochondrion inner membrane</keyword>
<keyword id="KW-0679">Respiratory chain</keyword>
<keyword id="KW-0812">Transmembrane</keyword>
<keyword id="KW-1133">Transmembrane helix</keyword>
<keyword id="KW-0813">Transport</keyword>
<keyword id="KW-0830">Ubiquinone</keyword>
<organism>
    <name type="scientific">Balaenoptera physalus</name>
    <name type="common">Fin whale</name>
    <name type="synonym">Balaena physalus</name>
    <dbReference type="NCBI Taxonomy" id="9770"/>
    <lineage>
        <taxon>Eukaryota</taxon>
        <taxon>Metazoa</taxon>
        <taxon>Chordata</taxon>
        <taxon>Craniata</taxon>
        <taxon>Vertebrata</taxon>
        <taxon>Euteleostomi</taxon>
        <taxon>Mammalia</taxon>
        <taxon>Eutheria</taxon>
        <taxon>Laurasiatheria</taxon>
        <taxon>Artiodactyla</taxon>
        <taxon>Whippomorpha</taxon>
        <taxon>Cetacea</taxon>
        <taxon>Mysticeti</taxon>
        <taxon>Balaenopteridae</taxon>
        <taxon>Balaenoptera</taxon>
    </lineage>
</organism>
<accession>P24950</accession>
<reference key="1">
    <citation type="journal article" date="1991" name="J. Mol. Evol.">
        <title>The complete nucleotide sequence of the mitochondrial DNA of the fin whale, Balaenoptera physalus.</title>
        <authorList>
            <person name="Arnason U."/>
            <person name="Gullberg A."/>
            <person name="Widegren B."/>
        </authorList>
    </citation>
    <scope>NUCLEOTIDE SEQUENCE [GENOMIC DNA]</scope>
    <source>
        <strain>Isolate No. 27 / Anno 1987</strain>
        <tissue>Liver</tissue>
    </source>
</reference>
<reference key="2">
    <citation type="journal article" date="1994" name="Mol. Biol. Evol.">
        <title>Phylogeny of all major groups of cetaceans based on DNA sequences from three mitochondrial genes.</title>
        <authorList>
            <person name="Milinkovitch M.C."/>
            <person name="Meyer A."/>
            <person name="Powell J.R."/>
        </authorList>
    </citation>
    <scope>NUCLEOTIDE SEQUENCE [GENOMIC DNA] OF 1-134</scope>
</reference>
<proteinExistence type="inferred from homology"/>
<geneLocation type="mitochondrion"/>
<gene>
    <name type="primary">MT-CYB</name>
    <name type="synonym">COB</name>
    <name type="synonym">CYTB</name>
    <name type="synonym">MTCYB</name>
</gene>
<sequence length="379" mass="42847">MTNIRKTHPLMKIVNDAFVDLPTPSNISSWWNFGSLLGLCLIMQILTGLFLAMHYTPDTTTAFSSVTHICRDVNYGWIIRYLHANGASMFFICLYAHMGRGLYYGSYAFRETWNIGVILLFTVMATAFVGYVLPWGQMSFWGATVITNLLSAIPYIGTTLVEWIWGGFSVDKATLTRFFAFHFILPFIILALAIVHLIFLHETGSNNPTGIPSDMDKIPFHPYHTIKDILGALLLILILLMLTLFAPDLLGDPDNYTPANPLSTPAHIKPEWYFLFAYAILRSIPNKLGGVLALLLSILILAFIPMLHTSNQRSMMFRPFSQFLFWVLVADLLTLTWIGGQPVEHPYMIVGQLASILYFLLILVLMPVTSLIENKLMKW</sequence>
<dbReference type="EMBL" id="X61145">
    <property type="protein sequence ID" value="CAA43443.1"/>
    <property type="molecule type" value="Genomic_DNA"/>
</dbReference>
<dbReference type="EMBL" id="U13126">
    <property type="protein sequence ID" value="AAC48436.1"/>
    <property type="molecule type" value="Genomic_DNA"/>
</dbReference>
<dbReference type="PIR" id="E58851">
    <property type="entry name" value="E58851"/>
</dbReference>
<dbReference type="RefSeq" id="NP_006901.1">
    <property type="nucleotide sequence ID" value="NC_001321.1"/>
</dbReference>
<dbReference type="SMR" id="P24950"/>
<dbReference type="GeneID" id="807619"/>
<dbReference type="CTD" id="4519"/>
<dbReference type="GO" id="GO:0005743">
    <property type="term" value="C:mitochondrial inner membrane"/>
    <property type="evidence" value="ECO:0007669"/>
    <property type="project" value="UniProtKB-SubCell"/>
</dbReference>
<dbReference type="GO" id="GO:0045275">
    <property type="term" value="C:respiratory chain complex III"/>
    <property type="evidence" value="ECO:0007669"/>
    <property type="project" value="InterPro"/>
</dbReference>
<dbReference type="GO" id="GO:0046872">
    <property type="term" value="F:metal ion binding"/>
    <property type="evidence" value="ECO:0007669"/>
    <property type="project" value="UniProtKB-KW"/>
</dbReference>
<dbReference type="GO" id="GO:0008121">
    <property type="term" value="F:ubiquinol-cytochrome-c reductase activity"/>
    <property type="evidence" value="ECO:0007669"/>
    <property type="project" value="InterPro"/>
</dbReference>
<dbReference type="GO" id="GO:0006122">
    <property type="term" value="P:mitochondrial electron transport, ubiquinol to cytochrome c"/>
    <property type="evidence" value="ECO:0007669"/>
    <property type="project" value="TreeGrafter"/>
</dbReference>
<dbReference type="CDD" id="cd00290">
    <property type="entry name" value="cytochrome_b_C"/>
    <property type="match status" value="1"/>
</dbReference>
<dbReference type="CDD" id="cd00284">
    <property type="entry name" value="Cytochrome_b_N"/>
    <property type="match status" value="1"/>
</dbReference>
<dbReference type="FunFam" id="1.20.810.10:FF:000002">
    <property type="entry name" value="Cytochrome b"/>
    <property type="match status" value="1"/>
</dbReference>
<dbReference type="Gene3D" id="1.20.810.10">
    <property type="entry name" value="Cytochrome Bc1 Complex, Chain C"/>
    <property type="match status" value="1"/>
</dbReference>
<dbReference type="InterPro" id="IPR005798">
    <property type="entry name" value="Cyt_b/b6_C"/>
</dbReference>
<dbReference type="InterPro" id="IPR036150">
    <property type="entry name" value="Cyt_b/b6_C_sf"/>
</dbReference>
<dbReference type="InterPro" id="IPR005797">
    <property type="entry name" value="Cyt_b/b6_N"/>
</dbReference>
<dbReference type="InterPro" id="IPR027387">
    <property type="entry name" value="Cytb/b6-like_sf"/>
</dbReference>
<dbReference type="InterPro" id="IPR030689">
    <property type="entry name" value="Cytochrome_b"/>
</dbReference>
<dbReference type="InterPro" id="IPR048260">
    <property type="entry name" value="Cytochrome_b_C_euk/bac"/>
</dbReference>
<dbReference type="InterPro" id="IPR048259">
    <property type="entry name" value="Cytochrome_b_N_euk/bac"/>
</dbReference>
<dbReference type="InterPro" id="IPR016174">
    <property type="entry name" value="Di-haem_cyt_TM"/>
</dbReference>
<dbReference type="PANTHER" id="PTHR19271">
    <property type="entry name" value="CYTOCHROME B"/>
    <property type="match status" value="1"/>
</dbReference>
<dbReference type="PANTHER" id="PTHR19271:SF16">
    <property type="entry name" value="CYTOCHROME B"/>
    <property type="match status" value="1"/>
</dbReference>
<dbReference type="Pfam" id="PF00032">
    <property type="entry name" value="Cytochrom_B_C"/>
    <property type="match status" value="1"/>
</dbReference>
<dbReference type="Pfam" id="PF00033">
    <property type="entry name" value="Cytochrome_B"/>
    <property type="match status" value="1"/>
</dbReference>
<dbReference type="PIRSF" id="PIRSF038885">
    <property type="entry name" value="COB"/>
    <property type="match status" value="1"/>
</dbReference>
<dbReference type="SUPFAM" id="SSF81648">
    <property type="entry name" value="a domain/subunit of cytochrome bc1 complex (Ubiquinol-cytochrome c reductase)"/>
    <property type="match status" value="1"/>
</dbReference>
<dbReference type="SUPFAM" id="SSF81342">
    <property type="entry name" value="Transmembrane di-heme cytochromes"/>
    <property type="match status" value="1"/>
</dbReference>
<dbReference type="PROSITE" id="PS51003">
    <property type="entry name" value="CYTB_CTER"/>
    <property type="match status" value="1"/>
</dbReference>
<dbReference type="PROSITE" id="PS51002">
    <property type="entry name" value="CYTB_NTER"/>
    <property type="match status" value="1"/>
</dbReference>